<name>RS12_BRUC2</name>
<reference key="1">
    <citation type="submission" date="2007-10" db="EMBL/GenBank/DDBJ databases">
        <title>Brucella canis ATCC 23365 whole genome shotgun sequencing project.</title>
        <authorList>
            <person name="Setubal J.C."/>
            <person name="Bowns C."/>
            <person name="Boyle S."/>
            <person name="Crasta O.R."/>
            <person name="Czar M.J."/>
            <person name="Dharmanolla C."/>
            <person name="Gillespie J.J."/>
            <person name="Kenyon R.W."/>
            <person name="Lu J."/>
            <person name="Mane S."/>
            <person name="Mohapatra S."/>
            <person name="Nagrani S."/>
            <person name="Purkayastha A."/>
            <person name="Rajasimha H.K."/>
            <person name="Shallom J.M."/>
            <person name="Shallom S."/>
            <person name="Shukla M."/>
            <person name="Snyder E.E."/>
            <person name="Sobral B.W."/>
            <person name="Wattam A.R."/>
            <person name="Will R."/>
            <person name="Williams K."/>
            <person name="Yoo H."/>
            <person name="Bruce D."/>
            <person name="Detter C."/>
            <person name="Munk C."/>
            <person name="Brettin T.S."/>
        </authorList>
    </citation>
    <scope>NUCLEOTIDE SEQUENCE [LARGE SCALE GENOMIC DNA]</scope>
    <source>
        <strain>ATCC 23365 / NCTC 10854 / RM-666</strain>
    </source>
</reference>
<sequence length="123" mass="13871">MPTVNQLIRKPRTAPVKRNKVPALQANPQKRGVCTRVYTTTPKKPNSALRKVAKVRLTNGFEVIGYIPGEGHNLQEHSVVMIRGGRVKDLPGVRYHIIRGVLDTQGVKNRKQRRSKYGAKRPK</sequence>
<keyword id="KW-0488">Methylation</keyword>
<keyword id="KW-1185">Reference proteome</keyword>
<keyword id="KW-0687">Ribonucleoprotein</keyword>
<keyword id="KW-0689">Ribosomal protein</keyword>
<keyword id="KW-0694">RNA-binding</keyword>
<keyword id="KW-0699">rRNA-binding</keyword>
<keyword id="KW-0820">tRNA-binding</keyword>
<comment type="function">
    <text evidence="2">With S4 and S5 plays an important role in translational accuracy.</text>
</comment>
<comment type="function">
    <text evidence="2">Interacts with and stabilizes bases of the 16S rRNA that are involved in tRNA selection in the A site and with the mRNA backbone. Located at the interface of the 30S and 50S subunits, it traverses the body of the 30S subunit contacting proteins on the other side and probably holding the rRNA structure together. The combined cluster of proteins S8, S12 and S17 appears to hold together the shoulder and platform of the 30S subunit.</text>
</comment>
<comment type="subunit">
    <text evidence="2">Part of the 30S ribosomal subunit. Contacts proteins S8 and S17. May interact with IF1 in the 30S initiation complex.</text>
</comment>
<comment type="similarity">
    <text evidence="2">Belongs to the universal ribosomal protein uS12 family.</text>
</comment>
<gene>
    <name evidence="2" type="primary">rpsL</name>
    <name type="ordered locus">BCAN_A1261</name>
</gene>
<feature type="chain" id="PRO_1000080383" description="Small ribosomal subunit protein uS12">
    <location>
        <begin position="1"/>
        <end position="123"/>
    </location>
</feature>
<feature type="modified residue" description="3-methylthioaspartic acid" evidence="1">
    <location>
        <position position="89"/>
    </location>
</feature>
<protein>
    <recommendedName>
        <fullName evidence="2">Small ribosomal subunit protein uS12</fullName>
    </recommendedName>
    <alternativeName>
        <fullName evidence="3">30S ribosomal protein S12</fullName>
    </alternativeName>
</protein>
<evidence type="ECO:0000250" key="1"/>
<evidence type="ECO:0000255" key="2">
    <source>
        <dbReference type="HAMAP-Rule" id="MF_00403"/>
    </source>
</evidence>
<evidence type="ECO:0000305" key="3"/>
<organism>
    <name type="scientific">Brucella canis (strain ATCC 23365 / NCTC 10854 / RM-666)</name>
    <dbReference type="NCBI Taxonomy" id="483179"/>
    <lineage>
        <taxon>Bacteria</taxon>
        <taxon>Pseudomonadati</taxon>
        <taxon>Pseudomonadota</taxon>
        <taxon>Alphaproteobacteria</taxon>
        <taxon>Hyphomicrobiales</taxon>
        <taxon>Brucellaceae</taxon>
        <taxon>Brucella/Ochrobactrum group</taxon>
        <taxon>Brucella</taxon>
    </lineage>
</organism>
<proteinExistence type="inferred from homology"/>
<dbReference type="EMBL" id="CP000872">
    <property type="protein sequence ID" value="ABX62310.1"/>
    <property type="molecule type" value="Genomic_DNA"/>
</dbReference>
<dbReference type="RefSeq" id="WP_002964366.1">
    <property type="nucleotide sequence ID" value="NC_010103.1"/>
</dbReference>
<dbReference type="SMR" id="A9M5Q5"/>
<dbReference type="GeneID" id="93016435"/>
<dbReference type="KEGG" id="bcs:BCAN_A1261"/>
<dbReference type="HOGENOM" id="CLU_104295_1_2_5"/>
<dbReference type="PRO" id="PR:A9M5Q5"/>
<dbReference type="Proteomes" id="UP000001385">
    <property type="component" value="Chromosome I"/>
</dbReference>
<dbReference type="GO" id="GO:0015935">
    <property type="term" value="C:small ribosomal subunit"/>
    <property type="evidence" value="ECO:0007669"/>
    <property type="project" value="InterPro"/>
</dbReference>
<dbReference type="GO" id="GO:0019843">
    <property type="term" value="F:rRNA binding"/>
    <property type="evidence" value="ECO:0007669"/>
    <property type="project" value="UniProtKB-UniRule"/>
</dbReference>
<dbReference type="GO" id="GO:0003735">
    <property type="term" value="F:structural constituent of ribosome"/>
    <property type="evidence" value="ECO:0007669"/>
    <property type="project" value="InterPro"/>
</dbReference>
<dbReference type="GO" id="GO:0000049">
    <property type="term" value="F:tRNA binding"/>
    <property type="evidence" value="ECO:0007669"/>
    <property type="project" value="UniProtKB-UniRule"/>
</dbReference>
<dbReference type="GO" id="GO:0006412">
    <property type="term" value="P:translation"/>
    <property type="evidence" value="ECO:0007669"/>
    <property type="project" value="UniProtKB-UniRule"/>
</dbReference>
<dbReference type="CDD" id="cd03368">
    <property type="entry name" value="Ribosomal_S12"/>
    <property type="match status" value="1"/>
</dbReference>
<dbReference type="FunFam" id="2.40.50.140:FF:000001">
    <property type="entry name" value="30S ribosomal protein S12"/>
    <property type="match status" value="1"/>
</dbReference>
<dbReference type="Gene3D" id="2.40.50.140">
    <property type="entry name" value="Nucleic acid-binding proteins"/>
    <property type="match status" value="1"/>
</dbReference>
<dbReference type="HAMAP" id="MF_00403_B">
    <property type="entry name" value="Ribosomal_uS12_B"/>
    <property type="match status" value="1"/>
</dbReference>
<dbReference type="InterPro" id="IPR012340">
    <property type="entry name" value="NA-bd_OB-fold"/>
</dbReference>
<dbReference type="InterPro" id="IPR006032">
    <property type="entry name" value="Ribosomal_uS12"/>
</dbReference>
<dbReference type="InterPro" id="IPR005679">
    <property type="entry name" value="Ribosomal_uS12_bac"/>
</dbReference>
<dbReference type="NCBIfam" id="TIGR00981">
    <property type="entry name" value="rpsL_bact"/>
    <property type="match status" value="1"/>
</dbReference>
<dbReference type="PANTHER" id="PTHR11652">
    <property type="entry name" value="30S RIBOSOMAL PROTEIN S12 FAMILY MEMBER"/>
    <property type="match status" value="1"/>
</dbReference>
<dbReference type="Pfam" id="PF00164">
    <property type="entry name" value="Ribosom_S12_S23"/>
    <property type="match status" value="1"/>
</dbReference>
<dbReference type="PIRSF" id="PIRSF002133">
    <property type="entry name" value="Ribosomal_S12/S23"/>
    <property type="match status" value="1"/>
</dbReference>
<dbReference type="PRINTS" id="PR01034">
    <property type="entry name" value="RIBOSOMALS12"/>
</dbReference>
<dbReference type="SUPFAM" id="SSF50249">
    <property type="entry name" value="Nucleic acid-binding proteins"/>
    <property type="match status" value="1"/>
</dbReference>
<dbReference type="PROSITE" id="PS00055">
    <property type="entry name" value="RIBOSOMAL_S12"/>
    <property type="match status" value="1"/>
</dbReference>
<accession>A9M5Q5</accession>